<feature type="chain" id="PRO_0000232866" description="Fibronectin type III domain-containing protein 11">
    <location>
        <begin position="1"/>
        <end position="333"/>
    </location>
</feature>
<feature type="domain" description="Fibronectin type-III" evidence="2">
    <location>
        <begin position="212"/>
        <end position="310"/>
    </location>
</feature>
<feature type="region of interest" description="Disordered" evidence="3">
    <location>
        <begin position="307"/>
        <end position="333"/>
    </location>
</feature>
<proteinExistence type="evidence at transcript level"/>
<sequence length="333" mass="38196">MNFQVTGLGLDKIKLDSPQSFLDQEEVEEAEDGQLLEPEAWRTYVERRNALQEFLTSDLSPHLLKRHHARMELLKKCSYYIEILPKHLALGDQNPLVLPTTMFQLIDPWKFQRMKKVGAAQTKIQLLLLGDLLEQLDHGRSELDALLESPDPRPFLAGWGLVEQRLADLSAVMDSFLAMMVPGRLHIKHRLVSDIGATKIPHIRLMLSTKMPVMFDRKESVAHQDWVSLRWFVTIQQAVPEQFELRYKLLDPRTQQECMQCGIIPVAACAFDIRNLLPNRAYKFTVKRAESYTLVYEPWRDSLTLHTRPGPPEGLAPSRLGKLGLSLTTPSER</sequence>
<protein>
    <recommendedName>
        <fullName>Fibronectin type III domain-containing protein 11</fullName>
    </recommendedName>
</protein>
<accession>Q2T9Z2</accession>
<gene>
    <name evidence="1" type="primary">FNDC11</name>
</gene>
<name>FND11_BOVIN</name>
<dbReference type="EMBL" id="BC111198">
    <property type="protein sequence ID" value="AAI11199.1"/>
    <property type="molecule type" value="mRNA"/>
</dbReference>
<dbReference type="RefSeq" id="NP_001073090.1">
    <property type="nucleotide sequence ID" value="NM_001079622.1"/>
</dbReference>
<dbReference type="RefSeq" id="XP_059748740.1">
    <property type="nucleotide sequence ID" value="XM_059892757.1"/>
</dbReference>
<dbReference type="RefSeq" id="XP_059748741.1">
    <property type="nucleotide sequence ID" value="XM_059892758.1"/>
</dbReference>
<dbReference type="RefSeq" id="XP_059748742.1">
    <property type="nucleotide sequence ID" value="XM_059892759.1"/>
</dbReference>
<dbReference type="FunCoup" id="Q2T9Z2">
    <property type="interactions" value="40"/>
</dbReference>
<dbReference type="STRING" id="9913.ENSBTAP00000069147"/>
<dbReference type="PaxDb" id="9913-ENSBTAP00000042516"/>
<dbReference type="Ensembl" id="ENSBTAT00000039331.5">
    <property type="protein sequence ID" value="ENSBTAP00000042516.3"/>
    <property type="gene ID" value="ENSBTAG00000027405.6"/>
</dbReference>
<dbReference type="GeneID" id="614565"/>
<dbReference type="KEGG" id="bta:614565"/>
<dbReference type="CTD" id="79025"/>
<dbReference type="VEuPathDB" id="HostDB:ENSBTAG00000027405"/>
<dbReference type="VGNC" id="VGNC:29061">
    <property type="gene designation" value="FNDC11"/>
</dbReference>
<dbReference type="eggNOG" id="ENOG502QW8H">
    <property type="taxonomic scope" value="Eukaryota"/>
</dbReference>
<dbReference type="GeneTree" id="ENSGT00390000006008"/>
<dbReference type="HOGENOM" id="CLU_049179_0_0_1"/>
<dbReference type="InParanoid" id="Q2T9Z2"/>
<dbReference type="OMA" id="WFTESQE"/>
<dbReference type="OrthoDB" id="8699528at2759"/>
<dbReference type="TreeFam" id="TF338188"/>
<dbReference type="Proteomes" id="UP000009136">
    <property type="component" value="Chromosome 13"/>
</dbReference>
<dbReference type="Bgee" id="ENSBTAG00000027405">
    <property type="expression patterns" value="Expressed in spermatid and 41 other cell types or tissues"/>
</dbReference>
<dbReference type="InterPro" id="IPR048317">
    <property type="entry name" value="DUF5581_C"/>
</dbReference>
<dbReference type="InterPro" id="IPR049231">
    <property type="entry name" value="DUF5581_N"/>
</dbReference>
<dbReference type="InterPro" id="IPR003961">
    <property type="entry name" value="FN3_dom"/>
</dbReference>
<dbReference type="InterPro" id="IPR036116">
    <property type="entry name" value="FN3_sf"/>
</dbReference>
<dbReference type="InterPro" id="IPR039581">
    <property type="entry name" value="FNDC11"/>
</dbReference>
<dbReference type="PANTHER" id="PTHR14537">
    <property type="entry name" value="FIBRONECTIN TYPE III DOMAIN-CONTAINING PROTEIN 11"/>
    <property type="match status" value="1"/>
</dbReference>
<dbReference type="Pfam" id="PF17744">
    <property type="entry name" value="DUF5581"/>
    <property type="match status" value="1"/>
</dbReference>
<dbReference type="Pfam" id="PF20996">
    <property type="entry name" value="DUF5581_N"/>
    <property type="match status" value="1"/>
</dbReference>
<dbReference type="SUPFAM" id="SSF49265">
    <property type="entry name" value="Fibronectin type III"/>
    <property type="match status" value="1"/>
</dbReference>
<dbReference type="PROSITE" id="PS50853">
    <property type="entry name" value="FN3"/>
    <property type="match status" value="1"/>
</dbReference>
<evidence type="ECO:0000250" key="1">
    <source>
        <dbReference type="UniProtKB" id="Q9BVV2"/>
    </source>
</evidence>
<evidence type="ECO:0000255" key="2">
    <source>
        <dbReference type="PROSITE-ProRule" id="PRU00316"/>
    </source>
</evidence>
<evidence type="ECO:0000256" key="3">
    <source>
        <dbReference type="SAM" id="MobiDB-lite"/>
    </source>
</evidence>
<keyword id="KW-1185">Reference proteome</keyword>
<reference key="1">
    <citation type="submission" date="2005-12" db="EMBL/GenBank/DDBJ databases">
        <authorList>
            <consortium name="NIH - Mammalian Gene Collection (MGC) project"/>
        </authorList>
    </citation>
    <scope>NUCLEOTIDE SEQUENCE [LARGE SCALE MRNA]</scope>
    <source>
        <strain>Crossbred X Angus</strain>
        <tissue>Liver</tissue>
    </source>
</reference>
<organism>
    <name type="scientific">Bos taurus</name>
    <name type="common">Bovine</name>
    <dbReference type="NCBI Taxonomy" id="9913"/>
    <lineage>
        <taxon>Eukaryota</taxon>
        <taxon>Metazoa</taxon>
        <taxon>Chordata</taxon>
        <taxon>Craniata</taxon>
        <taxon>Vertebrata</taxon>
        <taxon>Euteleostomi</taxon>
        <taxon>Mammalia</taxon>
        <taxon>Eutheria</taxon>
        <taxon>Laurasiatheria</taxon>
        <taxon>Artiodactyla</taxon>
        <taxon>Ruminantia</taxon>
        <taxon>Pecora</taxon>
        <taxon>Bovidae</taxon>
        <taxon>Bovinae</taxon>
        <taxon>Bos</taxon>
    </lineage>
</organism>